<proteinExistence type="inferred from homology"/>
<gene>
    <name type="primary">ahpF</name>
    <name type="ordered locus">SERP0059</name>
</gene>
<comment type="function">
    <text evidence="1">Serves to protect the cell against DNA damage by alkyl hydroperoxides. It can use either NADH or NADPH as electron donor for direct reduction of redox dyes or of alkyl hydroperoxides when combined with the AhpC protein (By similarity).</text>
</comment>
<comment type="cofactor">
    <cofactor evidence="1">
        <name>FAD</name>
        <dbReference type="ChEBI" id="CHEBI:57692"/>
    </cofactor>
    <text evidence="1">Binds 1 FAD per subunit.</text>
</comment>
<comment type="subunit">
    <text evidence="1">Homodimer.</text>
</comment>
<comment type="miscellaneous">
    <text>The active site is a redox-active disulfide bond.</text>
</comment>
<comment type="similarity">
    <text evidence="2">Belongs to the class-II pyridine nucleotide-disulfide oxidoreductase family.</text>
</comment>
<sequence length="507" mass="54688">MLNADLKQQLQQLLELMEGDVEFVASLGSDDKSNELKELLNEMAEMSAHITITEKSLKRTPSFSVNRPGEETGITFAGIPLGHEFNSLVLAILQVSGRAPKEKQSIIDQIKGLEGPFHFETFVSLTCQKCPDVVQALNLMSVINPNITHTMIDGAVFREESENIMAVPAVFLDGQEFGNGRMTVQDILTKLGSTQDASEFNDKDPYDVLIVGGGPASGSAAIYTARKGLRTGIVADRIGGQVNDTAGIENFITVKETTGSEFSSNLAEHIAQYDIDTMTGIRATNIEKTDSAIRVTLENDAVLESKTVIISTGASWRKLNIPGEDRLINKGVAFCPHCDGPLFENKDVAVIGGGNSGVEAAIDLAGIVKHVTLFEYASELKADSVLQERLRSLPNVDIKTSAKTTEVIGDDYVTGISYEDMTTGESQVVNLDGIFVQIGLVPNTSWLQNAVELNERGEVMINRDNATNVPGIFAAGDVTDQKNKQIIISMGAGANAALNAFDYIIRN</sequence>
<protein>
    <recommendedName>
        <fullName>Alkyl hydroperoxide reductase subunit F</fullName>
        <ecNumber>1.8.1.-</ecNumber>
    </recommendedName>
</protein>
<evidence type="ECO:0000250" key="1"/>
<evidence type="ECO:0000305" key="2"/>
<reference key="1">
    <citation type="journal article" date="2005" name="J. Bacteriol.">
        <title>Insights on evolution of virulence and resistance from the complete genome analysis of an early methicillin-resistant Staphylococcus aureus strain and a biofilm-producing methicillin-resistant Staphylococcus epidermidis strain.</title>
        <authorList>
            <person name="Gill S.R."/>
            <person name="Fouts D.E."/>
            <person name="Archer G.L."/>
            <person name="Mongodin E.F."/>
            <person name="DeBoy R.T."/>
            <person name="Ravel J."/>
            <person name="Paulsen I.T."/>
            <person name="Kolonay J.F."/>
            <person name="Brinkac L.M."/>
            <person name="Beanan M.J."/>
            <person name="Dodson R.J."/>
            <person name="Daugherty S.C."/>
            <person name="Madupu R."/>
            <person name="Angiuoli S.V."/>
            <person name="Durkin A.S."/>
            <person name="Haft D.H."/>
            <person name="Vamathevan J.J."/>
            <person name="Khouri H."/>
            <person name="Utterback T.R."/>
            <person name="Lee C."/>
            <person name="Dimitrov G."/>
            <person name="Jiang L."/>
            <person name="Qin H."/>
            <person name="Weidman J."/>
            <person name="Tran K."/>
            <person name="Kang K.H."/>
            <person name="Hance I.R."/>
            <person name="Nelson K.E."/>
            <person name="Fraser C.M."/>
        </authorList>
    </citation>
    <scope>NUCLEOTIDE SEQUENCE [LARGE SCALE GENOMIC DNA]</scope>
    <source>
        <strain>ATCC 35984 / DSM 28319 / BCRC 17069 / CCUG 31568 / BM 3577 / RP62A</strain>
    </source>
</reference>
<accession>Q5HRY2</accession>
<dbReference type="EC" id="1.8.1.-"/>
<dbReference type="EMBL" id="CP000029">
    <property type="protein sequence ID" value="AAW53450.1"/>
    <property type="molecule type" value="Genomic_DNA"/>
</dbReference>
<dbReference type="RefSeq" id="WP_002437172.1">
    <property type="nucleotide sequence ID" value="NC_002976.3"/>
</dbReference>
<dbReference type="SMR" id="Q5HRY2"/>
<dbReference type="STRING" id="176279.SERP0059"/>
<dbReference type="GeneID" id="50019669"/>
<dbReference type="KEGG" id="ser:SERP0059"/>
<dbReference type="eggNOG" id="COG3634">
    <property type="taxonomic scope" value="Bacteria"/>
</dbReference>
<dbReference type="HOGENOM" id="CLU_031864_4_2_9"/>
<dbReference type="Proteomes" id="UP000000531">
    <property type="component" value="Chromosome"/>
</dbReference>
<dbReference type="GO" id="GO:0050660">
    <property type="term" value="F:flavin adenine dinucleotide binding"/>
    <property type="evidence" value="ECO:0007669"/>
    <property type="project" value="InterPro"/>
</dbReference>
<dbReference type="GO" id="GO:0051287">
    <property type="term" value="F:NAD binding"/>
    <property type="evidence" value="ECO:0007669"/>
    <property type="project" value="InterPro"/>
</dbReference>
<dbReference type="GO" id="GO:0102039">
    <property type="term" value="F:NADH-dependent peroxiredoxin activity"/>
    <property type="evidence" value="ECO:0007669"/>
    <property type="project" value="InterPro"/>
</dbReference>
<dbReference type="GO" id="GO:0016668">
    <property type="term" value="F:oxidoreductase activity, acting on a sulfur group of donors, NAD(P) as acceptor"/>
    <property type="evidence" value="ECO:0007669"/>
    <property type="project" value="UniProtKB-ARBA"/>
</dbReference>
<dbReference type="GO" id="GO:0000302">
    <property type="term" value="P:response to reactive oxygen species"/>
    <property type="evidence" value="ECO:0007669"/>
    <property type="project" value="InterPro"/>
</dbReference>
<dbReference type="CDD" id="cd03026">
    <property type="entry name" value="AhpF_NTD_C"/>
    <property type="match status" value="1"/>
</dbReference>
<dbReference type="CDD" id="cd02974">
    <property type="entry name" value="AhpF_NTD_N"/>
    <property type="match status" value="1"/>
</dbReference>
<dbReference type="FunFam" id="3.50.50.60:FF:000007">
    <property type="entry name" value="Alkyl hydroperoxide reductase, F subunit"/>
    <property type="match status" value="1"/>
</dbReference>
<dbReference type="Gene3D" id="3.40.30.80">
    <property type="match status" value="1"/>
</dbReference>
<dbReference type="Gene3D" id="3.50.50.60">
    <property type="entry name" value="FAD/NAD(P)-binding domain"/>
    <property type="match status" value="2"/>
</dbReference>
<dbReference type="InterPro" id="IPR044141">
    <property type="entry name" value="AhpF_NTD_C"/>
</dbReference>
<dbReference type="InterPro" id="IPR044142">
    <property type="entry name" value="AhpF_NTD_N"/>
</dbReference>
<dbReference type="InterPro" id="IPR012081">
    <property type="entry name" value="Alkyl_hydroperoxide_Rdtase_suF"/>
</dbReference>
<dbReference type="InterPro" id="IPR036188">
    <property type="entry name" value="FAD/NAD-bd_sf"/>
</dbReference>
<dbReference type="InterPro" id="IPR023753">
    <property type="entry name" value="FAD/NAD-binding_dom"/>
</dbReference>
<dbReference type="InterPro" id="IPR050097">
    <property type="entry name" value="Ferredoxin-NADP_redctase_2"/>
</dbReference>
<dbReference type="InterPro" id="IPR008255">
    <property type="entry name" value="Pyr_nucl-diS_OxRdtase_2_AS"/>
</dbReference>
<dbReference type="InterPro" id="IPR012336">
    <property type="entry name" value="Thioredoxin-like_fold"/>
</dbReference>
<dbReference type="InterPro" id="IPR036249">
    <property type="entry name" value="Thioredoxin-like_sf"/>
</dbReference>
<dbReference type="NCBIfam" id="TIGR03140">
    <property type="entry name" value="AhpF"/>
    <property type="match status" value="1"/>
</dbReference>
<dbReference type="PANTHER" id="PTHR48105">
    <property type="entry name" value="THIOREDOXIN REDUCTASE 1-RELATED-RELATED"/>
    <property type="match status" value="1"/>
</dbReference>
<dbReference type="Pfam" id="PF07992">
    <property type="entry name" value="Pyr_redox_2"/>
    <property type="match status" value="1"/>
</dbReference>
<dbReference type="Pfam" id="PF13192">
    <property type="entry name" value="Thioredoxin_3"/>
    <property type="match status" value="1"/>
</dbReference>
<dbReference type="PIRSF" id="PIRSF000238">
    <property type="entry name" value="AhpF"/>
    <property type="match status" value="1"/>
</dbReference>
<dbReference type="PRINTS" id="PR00368">
    <property type="entry name" value="FADPNR"/>
</dbReference>
<dbReference type="PRINTS" id="PR00469">
    <property type="entry name" value="PNDRDTASEII"/>
</dbReference>
<dbReference type="SUPFAM" id="SSF51905">
    <property type="entry name" value="FAD/NAD(P)-binding domain"/>
    <property type="match status" value="1"/>
</dbReference>
<dbReference type="SUPFAM" id="SSF52833">
    <property type="entry name" value="Thioredoxin-like"/>
    <property type="match status" value="2"/>
</dbReference>
<dbReference type="PROSITE" id="PS00573">
    <property type="entry name" value="PYRIDINE_REDOX_2"/>
    <property type="match status" value="1"/>
</dbReference>
<name>AHPF_STAEQ</name>
<organism>
    <name type="scientific">Staphylococcus epidermidis (strain ATCC 35984 / DSM 28319 / BCRC 17069 / CCUG 31568 / BM 3577 / RP62A)</name>
    <dbReference type="NCBI Taxonomy" id="176279"/>
    <lineage>
        <taxon>Bacteria</taxon>
        <taxon>Bacillati</taxon>
        <taxon>Bacillota</taxon>
        <taxon>Bacilli</taxon>
        <taxon>Bacillales</taxon>
        <taxon>Staphylococcaceae</taxon>
        <taxon>Staphylococcus</taxon>
    </lineage>
</organism>
<keyword id="KW-1015">Disulfide bond</keyword>
<keyword id="KW-0274">FAD</keyword>
<keyword id="KW-0285">Flavoprotein</keyword>
<keyword id="KW-0520">NAD</keyword>
<keyword id="KW-0521">NADP</keyword>
<keyword id="KW-0560">Oxidoreductase</keyword>
<keyword id="KW-0676">Redox-active center</keyword>
<keyword id="KW-1185">Reference proteome</keyword>
<feature type="chain" id="PRO_0000166786" description="Alkyl hydroperoxide reductase subunit F">
    <location>
        <begin position="1"/>
        <end position="507"/>
    </location>
</feature>
<feature type="binding site" evidence="1">
    <location>
        <begin position="207"/>
        <end position="222"/>
    </location>
    <ligand>
        <name>FAD</name>
        <dbReference type="ChEBI" id="CHEBI:57692"/>
    </ligand>
</feature>
<feature type="binding site" evidence="1">
    <location>
        <begin position="347"/>
        <end position="361"/>
    </location>
    <ligand>
        <name>NAD(+)</name>
        <dbReference type="ChEBI" id="CHEBI:57540"/>
    </ligand>
</feature>
<feature type="binding site" evidence="1">
    <location>
        <begin position="467"/>
        <end position="477"/>
    </location>
    <ligand>
        <name>FAD</name>
        <dbReference type="ChEBI" id="CHEBI:57692"/>
    </ligand>
</feature>
<feature type="disulfide bond" description="Redox-active" evidence="1">
    <location>
        <begin position="335"/>
        <end position="338"/>
    </location>
</feature>